<protein>
    <recommendedName>
        <fullName evidence="1">Bifunctional glutamine synthetase adenylyltransferase/adenylyl-removing enzyme</fullName>
    </recommendedName>
    <alternativeName>
        <fullName evidence="1">ATP:glutamine synthetase adenylyltransferase</fullName>
    </alternativeName>
    <alternativeName>
        <fullName evidence="1">ATase</fullName>
    </alternativeName>
    <domain>
        <recommendedName>
            <fullName evidence="1">Glutamine synthetase adenylyl-L-tyrosine phosphorylase</fullName>
            <ecNumber evidence="1">2.7.7.89</ecNumber>
        </recommendedName>
        <alternativeName>
            <fullName evidence="1">Adenylyl removase</fullName>
            <shortName evidence="1">AR</shortName>
            <shortName evidence="1">AT-N</shortName>
        </alternativeName>
    </domain>
    <domain>
        <recommendedName>
            <fullName evidence="1">Glutamine synthetase adenylyl transferase</fullName>
            <ecNumber evidence="1">2.7.7.42</ecNumber>
        </recommendedName>
        <alternativeName>
            <fullName evidence="1">Adenylyl transferase</fullName>
            <shortName evidence="1">AT</shortName>
            <shortName evidence="1">AT-C</shortName>
        </alternativeName>
    </domain>
</protein>
<organism>
    <name type="scientific">Shigella boydii serotype 4 (strain Sb227)</name>
    <dbReference type="NCBI Taxonomy" id="300268"/>
    <lineage>
        <taxon>Bacteria</taxon>
        <taxon>Pseudomonadati</taxon>
        <taxon>Pseudomonadota</taxon>
        <taxon>Gammaproteobacteria</taxon>
        <taxon>Enterobacterales</taxon>
        <taxon>Enterobacteriaceae</taxon>
        <taxon>Shigella</taxon>
    </lineage>
</organism>
<accession>Q31WY2</accession>
<dbReference type="EC" id="2.7.7.89" evidence="1"/>
<dbReference type="EC" id="2.7.7.42" evidence="1"/>
<dbReference type="EMBL" id="CP000036">
    <property type="protein sequence ID" value="ABB67426.1"/>
    <property type="molecule type" value="Genomic_DNA"/>
</dbReference>
<dbReference type="RefSeq" id="WP_004986053.1">
    <property type="nucleotide sequence ID" value="NC_007613.1"/>
</dbReference>
<dbReference type="SMR" id="Q31WY2"/>
<dbReference type="KEGG" id="sbo:SBO_2909"/>
<dbReference type="HOGENOM" id="CLU_006233_0_1_6"/>
<dbReference type="Proteomes" id="UP000007067">
    <property type="component" value="Chromosome"/>
</dbReference>
<dbReference type="GO" id="GO:0005829">
    <property type="term" value="C:cytosol"/>
    <property type="evidence" value="ECO:0007669"/>
    <property type="project" value="TreeGrafter"/>
</dbReference>
<dbReference type="GO" id="GO:0008882">
    <property type="term" value="F:[glutamate-ammonia-ligase] adenylyltransferase activity"/>
    <property type="evidence" value="ECO:0007669"/>
    <property type="project" value="UniProtKB-UniRule"/>
</dbReference>
<dbReference type="GO" id="GO:0047388">
    <property type="term" value="F:[glutamine synthetase]-adenylyl-L-tyrosine phosphorylase activity"/>
    <property type="evidence" value="ECO:0007669"/>
    <property type="project" value="UniProtKB-EC"/>
</dbReference>
<dbReference type="GO" id="GO:0005524">
    <property type="term" value="F:ATP binding"/>
    <property type="evidence" value="ECO:0007669"/>
    <property type="project" value="UniProtKB-UniRule"/>
</dbReference>
<dbReference type="GO" id="GO:0000287">
    <property type="term" value="F:magnesium ion binding"/>
    <property type="evidence" value="ECO:0007669"/>
    <property type="project" value="UniProtKB-UniRule"/>
</dbReference>
<dbReference type="GO" id="GO:0000820">
    <property type="term" value="P:regulation of glutamine family amino acid metabolic process"/>
    <property type="evidence" value="ECO:0007669"/>
    <property type="project" value="UniProtKB-UniRule"/>
</dbReference>
<dbReference type="CDD" id="cd05401">
    <property type="entry name" value="NT_GlnE_GlnD_like"/>
    <property type="match status" value="2"/>
</dbReference>
<dbReference type="FunFam" id="1.10.4050.10:FF:000001">
    <property type="entry name" value="Bifunctional glutamine synthetase adenylyltransferase/adenylyl-removing enzyme"/>
    <property type="match status" value="1"/>
</dbReference>
<dbReference type="FunFam" id="1.20.120.1510:FF:000001">
    <property type="entry name" value="Bifunctional glutamine synthetase adenylyltransferase/adenylyl-removing enzyme"/>
    <property type="match status" value="1"/>
</dbReference>
<dbReference type="FunFam" id="1.20.120.330:FF:000005">
    <property type="entry name" value="Bifunctional glutamine synthetase adenylyltransferase/adenylyl-removing enzyme"/>
    <property type="match status" value="1"/>
</dbReference>
<dbReference type="FunFam" id="1.20.120.330:FF:000008">
    <property type="entry name" value="Bifunctional glutamine synthetase adenylyltransferase/adenylyl-removing enzyme"/>
    <property type="match status" value="1"/>
</dbReference>
<dbReference type="FunFam" id="3.30.460.10:FF:000009">
    <property type="entry name" value="Bifunctional glutamine synthetase adenylyltransferase/adenylyl-removing enzyme"/>
    <property type="match status" value="1"/>
</dbReference>
<dbReference type="FunFam" id="3.30.460.10:FF:000014">
    <property type="entry name" value="Bifunctional glutamine synthetase adenylyltransferase/adenylyl-removing enzyme"/>
    <property type="match status" value="1"/>
</dbReference>
<dbReference type="Gene3D" id="1.20.120.1510">
    <property type="match status" value="1"/>
</dbReference>
<dbReference type="Gene3D" id="3.30.460.10">
    <property type="entry name" value="Beta Polymerase, domain 2"/>
    <property type="match status" value="2"/>
</dbReference>
<dbReference type="Gene3D" id="1.10.4050.10">
    <property type="entry name" value="Glutamine synthase adenylyltransferase GlnE"/>
    <property type="match status" value="1"/>
</dbReference>
<dbReference type="Gene3D" id="1.20.120.330">
    <property type="entry name" value="Nucleotidyltransferases domain 2"/>
    <property type="match status" value="2"/>
</dbReference>
<dbReference type="HAMAP" id="MF_00802">
    <property type="entry name" value="GlnE"/>
    <property type="match status" value="1"/>
</dbReference>
<dbReference type="InterPro" id="IPR023057">
    <property type="entry name" value="GlnE"/>
</dbReference>
<dbReference type="InterPro" id="IPR005190">
    <property type="entry name" value="GlnE_rpt_dom"/>
</dbReference>
<dbReference type="InterPro" id="IPR043519">
    <property type="entry name" value="NT_sf"/>
</dbReference>
<dbReference type="InterPro" id="IPR013546">
    <property type="entry name" value="PII_UdlTrfase/GS_AdlTrfase"/>
</dbReference>
<dbReference type="NCBIfam" id="NF008292">
    <property type="entry name" value="PRK11072.1"/>
    <property type="match status" value="1"/>
</dbReference>
<dbReference type="PANTHER" id="PTHR30621:SF0">
    <property type="entry name" value="BIFUNCTIONAL GLUTAMINE SYNTHETASE ADENYLYLTRANSFERASE_ADENYLYL-REMOVING ENZYME"/>
    <property type="match status" value="1"/>
</dbReference>
<dbReference type="PANTHER" id="PTHR30621">
    <property type="entry name" value="GLUTAMINE SYNTHETASE ADENYLYLTRANSFERASE"/>
    <property type="match status" value="1"/>
</dbReference>
<dbReference type="Pfam" id="PF08335">
    <property type="entry name" value="GlnD_UR_UTase"/>
    <property type="match status" value="2"/>
</dbReference>
<dbReference type="Pfam" id="PF03710">
    <property type="entry name" value="GlnE"/>
    <property type="match status" value="2"/>
</dbReference>
<dbReference type="SUPFAM" id="SSF81301">
    <property type="entry name" value="Nucleotidyltransferase"/>
    <property type="match status" value="2"/>
</dbReference>
<dbReference type="SUPFAM" id="SSF81593">
    <property type="entry name" value="Nucleotidyltransferase substrate binding subunit/domain"/>
    <property type="match status" value="2"/>
</dbReference>
<sequence length="946" mass="108363">MKPLSSPLQQYWQTVVERLPEPLAEKSLSAQAKSVLTFSDFVQDSVIAHPEWLTELESQSPQADEWQHYAAWLQEALSNVSDEAGLMRELRLFRRRIMVRIAWAQTLALVTEESILQQLSHLAETLIVAARDWLYDACCREWGTPCNAQGEAQPLLILGMGKLGGGELNFSSDIDLIFAWPEHGCTQGGRRELDNAQFFTRMGQRLIKVLDQPTQDGFVYRVDMRLRPFGESGPLVLSFAALEDYYQEQGRDWERYAMVKARIMGDSEGVYANELRAMLRPFVFRRYIDFSVIQSLRNMKGMIAREVRRRGLTDNIKLGAGGIREIEFIVQVFQLIRGGREPSLQSRSLLPTLSVIAALHLLSENDAEQLRVAYLFLRRLENLLQSINDEQTQTLPSDELNRARLAWAMDFADWPQLTGALTAHMTNVRRVFNELIGDDESETQEESLSEQWRELWQDALQEDDTTPVLAHLSEDDRKQVLTLIADFRKELDKRTIGPRGRQVLDHLMPHLLSDVCAREDAAVTLSRITALLVGIVTRTTYLELLSEFPAALKHLISLCAASPMIASQLARYPLLLDELLDPNTLYQPTATDAYRDELRQYLLRVPEDDEEQQLEALRQFKQAQLLRIAAADIAGTLPVMKVSDHLTWLAEAMIDAVVQQAWVQMVARYGKPNHLNDREGRGFAVVGYGKLGGWELGYSSDLDLIFLHDCPMDAMTDGEREIDGRQFYLRLAQRIMHLFNTRTSSGILYEVDARLRPSGAAGMLVTSAEAFADYQKNEAWTWEHQALVRARVVYGDPQLTAHFDAVRREIMMLPREGKTLQTEVREMREKMRAHLGNKHRNRFDIKADEGGITDIEFITQYLVLRYAHEKPKLTRWSDNVRILELLAQNDIMEEQEAMALTRAYTTLRDELHHLALQELPGHVSEDCFTAERDLVRASWQKWLVEE</sequence>
<evidence type="ECO:0000255" key="1">
    <source>
        <dbReference type="HAMAP-Rule" id="MF_00802"/>
    </source>
</evidence>
<name>GLNE_SHIBS</name>
<feature type="chain" id="PRO_1000047015" description="Bifunctional glutamine synthetase adenylyltransferase/adenylyl-removing enzyme">
    <location>
        <begin position="1"/>
        <end position="946"/>
    </location>
</feature>
<feature type="region of interest" description="Adenylyl removase" evidence="1">
    <location>
        <begin position="1"/>
        <end position="440"/>
    </location>
</feature>
<feature type="region of interest" description="Adenylyl transferase" evidence="1">
    <location>
        <begin position="449"/>
        <end position="946"/>
    </location>
</feature>
<reference key="1">
    <citation type="journal article" date="2005" name="Nucleic Acids Res.">
        <title>Genome dynamics and diversity of Shigella species, the etiologic agents of bacillary dysentery.</title>
        <authorList>
            <person name="Yang F."/>
            <person name="Yang J."/>
            <person name="Zhang X."/>
            <person name="Chen L."/>
            <person name="Jiang Y."/>
            <person name="Yan Y."/>
            <person name="Tang X."/>
            <person name="Wang J."/>
            <person name="Xiong Z."/>
            <person name="Dong J."/>
            <person name="Xue Y."/>
            <person name="Zhu Y."/>
            <person name="Xu X."/>
            <person name="Sun L."/>
            <person name="Chen S."/>
            <person name="Nie H."/>
            <person name="Peng J."/>
            <person name="Xu J."/>
            <person name="Wang Y."/>
            <person name="Yuan Z."/>
            <person name="Wen Y."/>
            <person name="Yao Z."/>
            <person name="Shen Y."/>
            <person name="Qiang B."/>
            <person name="Hou Y."/>
            <person name="Yu J."/>
            <person name="Jin Q."/>
        </authorList>
    </citation>
    <scope>NUCLEOTIDE SEQUENCE [LARGE SCALE GENOMIC DNA]</scope>
    <source>
        <strain>Sb227</strain>
    </source>
</reference>
<comment type="function">
    <text evidence="1">Involved in the regulation of glutamine synthetase GlnA, a key enzyme in the process to assimilate ammonia. When cellular nitrogen levels are high, the C-terminal adenylyl transferase (AT) inactivates GlnA by covalent transfer of an adenylyl group from ATP to specific tyrosine residue of GlnA, thus reducing its activity. Conversely, when nitrogen levels are low, the N-terminal adenylyl removase (AR) activates GlnA by removing the adenylyl group by phosphorolysis, increasing its activity. The regulatory region of GlnE binds the signal transduction protein PII (GlnB) which indicates the nitrogen status of the cell.</text>
</comment>
<comment type="catalytic activity">
    <reaction evidence="1">
        <text>[glutamine synthetase]-O(4)-(5'-adenylyl)-L-tyrosine + phosphate = [glutamine synthetase]-L-tyrosine + ADP</text>
        <dbReference type="Rhea" id="RHEA:43716"/>
        <dbReference type="Rhea" id="RHEA-COMP:10660"/>
        <dbReference type="Rhea" id="RHEA-COMP:10661"/>
        <dbReference type="ChEBI" id="CHEBI:43474"/>
        <dbReference type="ChEBI" id="CHEBI:46858"/>
        <dbReference type="ChEBI" id="CHEBI:83624"/>
        <dbReference type="ChEBI" id="CHEBI:456216"/>
        <dbReference type="EC" id="2.7.7.89"/>
    </reaction>
</comment>
<comment type="catalytic activity">
    <reaction evidence="1">
        <text>[glutamine synthetase]-L-tyrosine + ATP = [glutamine synthetase]-O(4)-(5'-adenylyl)-L-tyrosine + diphosphate</text>
        <dbReference type="Rhea" id="RHEA:18589"/>
        <dbReference type="Rhea" id="RHEA-COMP:10660"/>
        <dbReference type="Rhea" id="RHEA-COMP:10661"/>
        <dbReference type="ChEBI" id="CHEBI:30616"/>
        <dbReference type="ChEBI" id="CHEBI:33019"/>
        <dbReference type="ChEBI" id="CHEBI:46858"/>
        <dbReference type="ChEBI" id="CHEBI:83624"/>
        <dbReference type="EC" id="2.7.7.42"/>
    </reaction>
</comment>
<comment type="cofactor">
    <cofactor evidence="1">
        <name>Mg(2+)</name>
        <dbReference type="ChEBI" id="CHEBI:18420"/>
    </cofactor>
</comment>
<comment type="similarity">
    <text evidence="1">Belongs to the GlnE family.</text>
</comment>
<proteinExistence type="inferred from homology"/>
<keyword id="KW-0067">ATP-binding</keyword>
<keyword id="KW-0460">Magnesium</keyword>
<keyword id="KW-0511">Multifunctional enzyme</keyword>
<keyword id="KW-0547">Nucleotide-binding</keyword>
<keyword id="KW-0548">Nucleotidyltransferase</keyword>
<keyword id="KW-0808">Transferase</keyword>
<gene>
    <name evidence="1" type="primary">glnE</name>
    <name type="ordered locus">SBO_2909</name>
</gene>